<organism>
    <name type="scientific">Oryctolagus cuniculus</name>
    <name type="common">Rabbit</name>
    <dbReference type="NCBI Taxonomy" id="9986"/>
    <lineage>
        <taxon>Eukaryota</taxon>
        <taxon>Metazoa</taxon>
        <taxon>Chordata</taxon>
        <taxon>Craniata</taxon>
        <taxon>Vertebrata</taxon>
        <taxon>Euteleostomi</taxon>
        <taxon>Mammalia</taxon>
        <taxon>Eutheria</taxon>
        <taxon>Euarchontoglires</taxon>
        <taxon>Glires</taxon>
        <taxon>Lagomorpha</taxon>
        <taxon>Leporidae</taxon>
        <taxon>Oryctolagus</taxon>
    </lineage>
</organism>
<keyword id="KW-0025">Alternative splicing</keyword>
<keyword id="KW-0175">Coiled coil</keyword>
<keyword id="KW-0176">Collagen</keyword>
<keyword id="KW-1015">Disulfide bond</keyword>
<keyword id="KW-0254">Endocytosis</keyword>
<keyword id="KW-0325">Glycoprotein</keyword>
<keyword id="KW-0427">LDL</keyword>
<keyword id="KW-0472">Membrane</keyword>
<keyword id="KW-0597">Phosphoprotein</keyword>
<keyword id="KW-0675">Receptor</keyword>
<keyword id="KW-1185">Reference proteome</keyword>
<keyword id="KW-0735">Signal-anchor</keyword>
<keyword id="KW-0812">Transmembrane</keyword>
<keyword id="KW-1133">Transmembrane helix</keyword>
<gene>
    <name type="primary">MSR1</name>
</gene>
<sequence length="454" mass="49745">MAQWDSFTDQQEDTDSCSESVKFDARSNTALLPPNPKNGPPLQEKLKSFKAALIALYLLVFAVLIPIIAIMAAQLLKWEMKNCTVGSINANSVSSSLLGRGNDSEHEVRFREVVMEHISKMEKRIQYISDTEENLVDSEHFQNFSVTTDQRFADVLLQLSTLVPTVQGHGNAVDEITRSLISLNTTLLDLHLYVETLNVKFQENTLKGQEEISKLKERVHNASAEIMSMKEEQVHLEQEIKREVKVLNNITNDLRLKDWEHSQTLRNITLIQGPPGPPGEKGDRGPTGESGPPGVPGPVGPPGLKGDRGSIGFPGSRGYPGQSGKTGRTGYPGPKGQKGEKGSGSILTPSATVRLVGGRGPHEGRVEILHNGQWGTVCDDHWELRAGQVVCRSLGYRGVKSVHKKAYFGQGTGPIWLNEVPCLGMESSIEECKIRQWGVRVCSHGEDAGVTCTL</sequence>
<reference key="1">
    <citation type="journal article" date="1992" name="J. Clin. Invest.">
        <title>Rabbit aortic smooth muscle cells express inducible macrophage scavenger receptor messenger RNA that is absent from endothelial cells.</title>
        <authorList>
            <person name="Bickel P.E."/>
            <person name="Freeman M.W."/>
        </authorList>
    </citation>
    <scope>NUCLEOTIDE SEQUENCE [MRNA]</scope>
</reference>
<reference key="2">
    <citation type="journal article" date="1993" name="J. Biol. Chem.">
        <title>Charged collagen structure mediates the recognition of negatively charged macromolecules by macrophage scavenger receptors.</title>
        <authorList>
            <person name="Doi T."/>
            <person name="Wada Y."/>
            <person name="Kodama T."/>
            <person name="Higashi K.I."/>
            <person name="Kurihara Y."/>
            <person name="Miyazaki T."/>
            <person name="Nakamura H."/>
            <person name="Uesugi S."/>
            <person name="Imanishi T."/>
            <person name="Kawabe Y."/>
            <person name="Itakura H."/>
            <person name="Yazaki Y."/>
            <person name="Matsumoto A."/>
        </authorList>
    </citation>
    <scope>NUCLEOTIDE SEQUENCE [MRNA]</scope>
</reference>
<dbReference type="EMBL" id="L11693">
    <property type="protein sequence ID" value="AAA31402.1"/>
    <property type="molecule type" value="mRNA"/>
</dbReference>
<dbReference type="EMBL" id="L11692">
    <property type="protein sequence ID" value="AAA31403.1"/>
    <property type="molecule type" value="mRNA"/>
</dbReference>
<dbReference type="EMBL" id="D13381">
    <property type="protein sequence ID" value="BAA02649.1"/>
    <property type="molecule type" value="mRNA"/>
</dbReference>
<dbReference type="PIR" id="A44407">
    <property type="entry name" value="A44407"/>
</dbReference>
<dbReference type="PIR" id="I46862">
    <property type="entry name" value="I46862"/>
</dbReference>
<dbReference type="PIR" id="I46863">
    <property type="entry name" value="I46863"/>
</dbReference>
<dbReference type="RefSeq" id="NP_001075717.1">
    <molecule id="Q05585-1"/>
    <property type="nucleotide sequence ID" value="NM_001082248.1"/>
</dbReference>
<dbReference type="SMR" id="Q05585"/>
<dbReference type="FunCoup" id="Q05585">
    <property type="interactions" value="107"/>
</dbReference>
<dbReference type="STRING" id="9986.ENSOCUP00000020109"/>
<dbReference type="GlyCosmos" id="Q05585">
    <property type="glycosylation" value="7 sites, No reported glycans"/>
</dbReference>
<dbReference type="PaxDb" id="9986-ENSOCUP00000020109"/>
<dbReference type="GeneID" id="100009067"/>
<dbReference type="KEGG" id="ocu:100009067"/>
<dbReference type="CTD" id="4481"/>
<dbReference type="eggNOG" id="ENOG502QUW0">
    <property type="taxonomic scope" value="Eukaryota"/>
</dbReference>
<dbReference type="InParanoid" id="Q05585"/>
<dbReference type="OrthoDB" id="536948at2759"/>
<dbReference type="Proteomes" id="UP000001811">
    <property type="component" value="Unplaced"/>
</dbReference>
<dbReference type="GO" id="GO:0005581">
    <property type="term" value="C:collagen trimer"/>
    <property type="evidence" value="ECO:0007669"/>
    <property type="project" value="UniProtKB-KW"/>
</dbReference>
<dbReference type="GO" id="GO:0034362">
    <property type="term" value="C:low-density lipoprotein particle"/>
    <property type="evidence" value="ECO:0007669"/>
    <property type="project" value="UniProtKB-KW"/>
</dbReference>
<dbReference type="GO" id="GO:0005886">
    <property type="term" value="C:plasma membrane"/>
    <property type="evidence" value="ECO:0007669"/>
    <property type="project" value="TreeGrafter"/>
</dbReference>
<dbReference type="GO" id="GO:0005044">
    <property type="term" value="F:scavenger receptor activity"/>
    <property type="evidence" value="ECO:0007669"/>
    <property type="project" value="InterPro"/>
</dbReference>
<dbReference type="GO" id="GO:0004252">
    <property type="term" value="F:serine-type endopeptidase activity"/>
    <property type="evidence" value="ECO:0007669"/>
    <property type="project" value="TreeGrafter"/>
</dbReference>
<dbReference type="GO" id="GO:0006898">
    <property type="term" value="P:receptor-mediated endocytosis"/>
    <property type="evidence" value="ECO:0007669"/>
    <property type="project" value="InterPro"/>
</dbReference>
<dbReference type="GO" id="GO:0031638">
    <property type="term" value="P:zymogen activation"/>
    <property type="evidence" value="ECO:0007669"/>
    <property type="project" value="TreeGrafter"/>
</dbReference>
<dbReference type="FunFam" id="3.10.250.10:FF:000011">
    <property type="entry name" value="Scavenger receptor class A member 5"/>
    <property type="match status" value="1"/>
</dbReference>
<dbReference type="Gene3D" id="3.10.250.10">
    <property type="entry name" value="SRCR-like domain"/>
    <property type="match status" value="1"/>
</dbReference>
<dbReference type="InterPro" id="IPR008160">
    <property type="entry name" value="Collagen"/>
</dbReference>
<dbReference type="InterPro" id="IPR003543">
    <property type="entry name" value="SR-AI/II"/>
</dbReference>
<dbReference type="InterPro" id="IPR001190">
    <property type="entry name" value="SRCR"/>
</dbReference>
<dbReference type="InterPro" id="IPR036772">
    <property type="entry name" value="SRCR-like_dom_sf"/>
</dbReference>
<dbReference type="PANTHER" id="PTHR48071:SF16">
    <property type="entry name" value="MACROPHAGE SCAVENGER RECEPTOR TYPES I AND II"/>
    <property type="match status" value="1"/>
</dbReference>
<dbReference type="PANTHER" id="PTHR48071">
    <property type="entry name" value="SRCR DOMAIN-CONTAINING PROTEIN"/>
    <property type="match status" value="1"/>
</dbReference>
<dbReference type="Pfam" id="PF01391">
    <property type="entry name" value="Collagen"/>
    <property type="match status" value="2"/>
</dbReference>
<dbReference type="Pfam" id="PF03523">
    <property type="entry name" value="Macscav_rec"/>
    <property type="match status" value="1"/>
</dbReference>
<dbReference type="Pfam" id="PF00530">
    <property type="entry name" value="SRCR"/>
    <property type="match status" value="1"/>
</dbReference>
<dbReference type="PRINTS" id="PR01408">
    <property type="entry name" value="MACSCAVRCPTR"/>
</dbReference>
<dbReference type="PRINTS" id="PR00258">
    <property type="entry name" value="SPERACTRCPTR"/>
</dbReference>
<dbReference type="SMART" id="SM00202">
    <property type="entry name" value="SR"/>
    <property type="match status" value="1"/>
</dbReference>
<dbReference type="SUPFAM" id="SSF56487">
    <property type="entry name" value="SRCR-like"/>
    <property type="match status" value="1"/>
</dbReference>
<dbReference type="PROSITE" id="PS00420">
    <property type="entry name" value="SRCR_1"/>
    <property type="match status" value="1"/>
</dbReference>
<dbReference type="PROSITE" id="PS50287">
    <property type="entry name" value="SRCR_2"/>
    <property type="match status" value="1"/>
</dbReference>
<accession>Q05585</accession>
<proteinExistence type="evidence at transcript level"/>
<protein>
    <recommendedName>
        <fullName>Macrophage scavenger receptor types I and II</fullName>
    </recommendedName>
    <alternativeName>
        <fullName>Macrophage acetylated LDL receptor I and II</fullName>
    </alternativeName>
    <cdAntigenName>CD204</cdAntigenName>
</protein>
<evidence type="ECO:0000250" key="1">
    <source>
        <dbReference type="UniProtKB" id="P21757"/>
    </source>
</evidence>
<evidence type="ECO:0000250" key="2">
    <source>
        <dbReference type="UniProtKB" id="P30204"/>
    </source>
</evidence>
<evidence type="ECO:0000255" key="3"/>
<evidence type="ECO:0000255" key="4">
    <source>
        <dbReference type="PROSITE-ProRule" id="PRU00196"/>
    </source>
</evidence>
<evidence type="ECO:0000256" key="5">
    <source>
        <dbReference type="SAM" id="MobiDB-lite"/>
    </source>
</evidence>
<evidence type="ECO:0000305" key="6"/>
<name>MSRE_RABIT</name>
<feature type="chain" id="PRO_0000181629" description="Macrophage scavenger receptor types I and II">
    <location>
        <begin position="1"/>
        <end position="454"/>
    </location>
</feature>
<feature type="topological domain" description="Cytoplasmic" evidence="3">
    <location>
        <begin position="1"/>
        <end position="50"/>
    </location>
</feature>
<feature type="transmembrane region" description="Helical; Signal-anchor for type II membrane protein" evidence="3">
    <location>
        <begin position="51"/>
        <end position="73"/>
    </location>
</feature>
<feature type="topological domain" description="Extracellular" evidence="3">
    <location>
        <begin position="74"/>
        <end position="454"/>
    </location>
</feature>
<feature type="domain" description="Collagen-like">
    <location>
        <begin position="273"/>
        <end position="344"/>
    </location>
</feature>
<feature type="domain" description="SRCR" evidence="4">
    <location>
        <begin position="353"/>
        <end position="453"/>
    </location>
</feature>
<feature type="region of interest" description="Disordered" evidence="5">
    <location>
        <begin position="1"/>
        <end position="22"/>
    </location>
</feature>
<feature type="region of interest" description="Spacer" evidence="6">
    <location>
        <begin position="74"/>
        <end position="109"/>
    </location>
</feature>
<feature type="region of interest" description="Disordered" evidence="5">
    <location>
        <begin position="267"/>
        <end position="347"/>
    </location>
</feature>
<feature type="coiled-coil region" evidence="3">
    <location>
        <begin position="199"/>
        <end position="256"/>
    </location>
</feature>
<feature type="modified residue" description="Phosphoserine" evidence="2">
    <location>
        <position position="27"/>
    </location>
</feature>
<feature type="glycosylation site" description="N-linked (GlcNAc...) asparagine" evidence="3">
    <location>
        <position position="82"/>
    </location>
</feature>
<feature type="glycosylation site" description="N-linked (GlcNAc...) asparagine" evidence="3">
    <location>
        <position position="102"/>
    </location>
</feature>
<feature type="glycosylation site" description="N-linked (GlcNAc...) asparagine" evidence="3">
    <location>
        <position position="143"/>
    </location>
</feature>
<feature type="glycosylation site" description="N-linked (GlcNAc...) asparagine" evidence="3">
    <location>
        <position position="184"/>
    </location>
</feature>
<feature type="glycosylation site" description="N-linked (GlcNAc...) asparagine" evidence="3">
    <location>
        <position position="221"/>
    </location>
</feature>
<feature type="glycosylation site" description="N-linked (GlcNAc...) asparagine" evidence="3">
    <location>
        <position position="249"/>
    </location>
</feature>
<feature type="glycosylation site" description="N-linked (GlcNAc...) asparagine" evidence="3">
    <location>
        <position position="267"/>
    </location>
</feature>
<feature type="disulfide bond" evidence="4">
    <location>
        <begin position="378"/>
        <end position="442"/>
    </location>
</feature>
<feature type="disulfide bond" evidence="4">
    <location>
        <begin position="391"/>
        <end position="452"/>
    </location>
</feature>
<feature type="disulfide bond" evidence="4">
    <location>
        <begin position="422"/>
        <end position="432"/>
    </location>
</feature>
<feature type="splice variant" id="VSP_006233" description="In isoform II." evidence="6">
    <original>TPSATVR</original>
    <variation>RPVQLTP</variation>
    <location>
        <begin position="348"/>
        <end position="354"/>
    </location>
</feature>
<feature type="splice variant" id="VSP_006234" description="In isoform II." evidence="6">
    <location>
        <begin position="355"/>
        <end position="454"/>
    </location>
</feature>
<feature type="sequence conflict" description="In Ref. 2; BAA02649." evidence="6" ref="2">
    <original>H</original>
    <variation>D</variation>
    <location>
        <position position="106"/>
    </location>
</feature>
<comment type="function">
    <text evidence="1">Membrane glycoproteins implicated in the pathologic deposition of cholesterol in arterial walls during atherogenesis. Two types of receptor subunits exist. These receptors mediate the endocytosis of a diverse group of macromolecules, including modified low density lipoproteins (LDL).</text>
</comment>
<comment type="subunit">
    <text evidence="1 2">Homotrimer. Interacts with MYO18A.</text>
</comment>
<comment type="subcellular location">
    <subcellularLocation>
        <location>Membrane</location>
        <topology>Single-pass type II membrane protein</topology>
    </subcellularLocation>
</comment>
<comment type="alternative products">
    <event type="alternative splicing"/>
    <isoform>
        <id>Q05585-1</id>
        <name>I</name>
        <sequence type="displayed"/>
    </isoform>
    <isoform>
        <id>Q05585-2</id>
        <name>II</name>
        <sequence type="described" ref="VSP_006233 VSP_006234"/>
    </isoform>
</comment>